<reference key="1">
    <citation type="journal article" date="2003" name="Mol. Immunol.">
        <title>Molecular cloning and immunological characterisation of potential allergens from the mould Fusarium culmorum.</title>
        <authorList>
            <person name="Hoff M."/>
            <person name="Ballmer-Weber B.K."/>
            <person name="Niggemann B."/>
            <person name="Cistero-Bahima A."/>
            <person name="San Miguel-Moncin M."/>
            <person name="Conti A."/>
            <person name="Haustein D."/>
            <person name="Vieths S."/>
        </authorList>
    </citation>
    <scope>NUCLEOTIDE SEQUENCE [MRNA]</scope>
    <scope>ALLERGEN</scope>
</reference>
<dbReference type="EMBL" id="AY077707">
    <property type="protein sequence ID" value="AAL79931.1"/>
    <property type="molecule type" value="mRNA"/>
</dbReference>
<dbReference type="SMR" id="Q8TFM8"/>
<dbReference type="Allergome" id="3289">
    <property type="allergen name" value="Fus c 2.0101"/>
</dbReference>
<dbReference type="Allergome" id="701">
    <property type="allergen name" value="Fus c 2"/>
</dbReference>
<dbReference type="OMA" id="RIICCYG"/>
<dbReference type="OrthoDB" id="19690at2759"/>
<dbReference type="CDD" id="cd02947">
    <property type="entry name" value="TRX_family"/>
    <property type="match status" value="1"/>
</dbReference>
<dbReference type="Gene3D" id="3.40.30.10">
    <property type="entry name" value="Glutaredoxin"/>
    <property type="match status" value="1"/>
</dbReference>
<dbReference type="InterPro" id="IPR036249">
    <property type="entry name" value="Thioredoxin-like_sf"/>
</dbReference>
<dbReference type="InterPro" id="IPR017937">
    <property type="entry name" value="Thioredoxin_CS"/>
</dbReference>
<dbReference type="InterPro" id="IPR013766">
    <property type="entry name" value="Thioredoxin_domain"/>
</dbReference>
<dbReference type="PANTHER" id="PTHR46115">
    <property type="entry name" value="THIOREDOXIN-LIKE PROTEIN 1"/>
    <property type="match status" value="1"/>
</dbReference>
<dbReference type="Pfam" id="PF00085">
    <property type="entry name" value="Thioredoxin"/>
    <property type="match status" value="1"/>
</dbReference>
<dbReference type="PRINTS" id="PR00421">
    <property type="entry name" value="THIOREDOXIN"/>
</dbReference>
<dbReference type="SUPFAM" id="SSF52833">
    <property type="entry name" value="Thioredoxin-like"/>
    <property type="match status" value="1"/>
</dbReference>
<dbReference type="PROSITE" id="PS00194">
    <property type="entry name" value="THIOREDOXIN_1"/>
    <property type="match status" value="1"/>
</dbReference>
<dbReference type="PROSITE" id="PS51352">
    <property type="entry name" value="THIOREDOXIN_2"/>
    <property type="match status" value="1"/>
</dbReference>
<comment type="function">
    <text>Participates in various redox reactions through the reversible oxidation of its active center dithiol to a disulfide and catalyzes dithiol-disulfide exchange reactions.</text>
</comment>
<comment type="allergen">
    <text evidence="2">Causes an allergic reaction in human. Binds to IgE.</text>
</comment>
<comment type="similarity">
    <text evidence="3">Belongs to the thioredoxin family.</text>
</comment>
<name>THIO_FUSCU</name>
<keyword id="KW-0020">Allergen</keyword>
<keyword id="KW-1015">Disulfide bond</keyword>
<keyword id="KW-0249">Electron transport</keyword>
<keyword id="KW-0676">Redox-active center</keyword>
<keyword id="KW-0813">Transport</keyword>
<sequence length="121" mass="13017">MVHHITSNDELQKLLSSTTYVVVDFFADWCPPCKAIAPVYEQLSTKHSVPDVLAFAKVNVDHVQDAAQQYGITAMPTFMFFKEGKQVAVNGQAVIKGADPRTLGAAAEKLGGLAQKRVAGA</sequence>
<proteinExistence type="evidence at protein level"/>
<protein>
    <recommendedName>
        <fullName>Thioredoxin-like protein</fullName>
    </recommendedName>
    <allergenName>Fus c 2</allergenName>
</protein>
<evidence type="ECO:0000255" key="1">
    <source>
        <dbReference type="PROSITE-ProRule" id="PRU00691"/>
    </source>
</evidence>
<evidence type="ECO:0000269" key="2">
    <source>
    </source>
</evidence>
<evidence type="ECO:0000305" key="3"/>
<accession>Q8TFM8</accession>
<feature type="chain" id="PRO_0000120040" description="Thioredoxin-like protein">
    <location>
        <begin position="1"/>
        <end position="121"/>
    </location>
</feature>
<feature type="domain" description="Thioredoxin" evidence="1">
    <location>
        <begin position="2"/>
        <end position="112"/>
    </location>
</feature>
<feature type="disulfide bond" description="Redox-active" evidence="1">
    <location>
        <begin position="30"/>
        <end position="33"/>
    </location>
</feature>
<organism>
    <name type="scientific">Fusarium culmorum</name>
    <dbReference type="NCBI Taxonomy" id="5516"/>
    <lineage>
        <taxon>Eukaryota</taxon>
        <taxon>Fungi</taxon>
        <taxon>Dikarya</taxon>
        <taxon>Ascomycota</taxon>
        <taxon>Pezizomycotina</taxon>
        <taxon>Sordariomycetes</taxon>
        <taxon>Hypocreomycetidae</taxon>
        <taxon>Hypocreales</taxon>
        <taxon>Nectriaceae</taxon>
        <taxon>Fusarium</taxon>
    </lineage>
</organism>